<dbReference type="EC" id="3.1.1.96" evidence="1"/>
<dbReference type="EMBL" id="CP000675">
    <property type="protein sequence ID" value="ABQ55252.1"/>
    <property type="molecule type" value="Genomic_DNA"/>
</dbReference>
<dbReference type="RefSeq" id="WP_010947570.1">
    <property type="nucleotide sequence ID" value="NZ_JAPMSS010000005.1"/>
</dbReference>
<dbReference type="SMR" id="A5ID02"/>
<dbReference type="GeneID" id="57035836"/>
<dbReference type="KEGG" id="lpc:LPC_1289"/>
<dbReference type="HOGENOM" id="CLU_076901_1_0_6"/>
<dbReference type="GO" id="GO:0005737">
    <property type="term" value="C:cytoplasm"/>
    <property type="evidence" value="ECO:0007669"/>
    <property type="project" value="UniProtKB-SubCell"/>
</dbReference>
<dbReference type="GO" id="GO:0051500">
    <property type="term" value="F:D-tyrosyl-tRNA(Tyr) deacylase activity"/>
    <property type="evidence" value="ECO:0007669"/>
    <property type="project" value="TreeGrafter"/>
</dbReference>
<dbReference type="GO" id="GO:0106026">
    <property type="term" value="F:Gly-tRNA(Ala) deacylase activity"/>
    <property type="evidence" value="ECO:0007669"/>
    <property type="project" value="UniProtKB-UniRule"/>
</dbReference>
<dbReference type="GO" id="GO:0043908">
    <property type="term" value="F:Ser(Gly)-tRNA(Ala) hydrolase activity"/>
    <property type="evidence" value="ECO:0007669"/>
    <property type="project" value="UniProtKB-UniRule"/>
</dbReference>
<dbReference type="GO" id="GO:0000049">
    <property type="term" value="F:tRNA binding"/>
    <property type="evidence" value="ECO:0007669"/>
    <property type="project" value="UniProtKB-UniRule"/>
</dbReference>
<dbReference type="GO" id="GO:0019478">
    <property type="term" value="P:D-amino acid catabolic process"/>
    <property type="evidence" value="ECO:0007669"/>
    <property type="project" value="UniProtKB-UniRule"/>
</dbReference>
<dbReference type="FunFam" id="3.50.80.10:FF:000001">
    <property type="entry name" value="D-aminoacyl-tRNA deacylase"/>
    <property type="match status" value="1"/>
</dbReference>
<dbReference type="Gene3D" id="3.50.80.10">
    <property type="entry name" value="D-tyrosyl-tRNA(Tyr) deacylase"/>
    <property type="match status" value="1"/>
</dbReference>
<dbReference type="HAMAP" id="MF_00518">
    <property type="entry name" value="Deacylase_Dtd"/>
    <property type="match status" value="1"/>
</dbReference>
<dbReference type="InterPro" id="IPR003732">
    <property type="entry name" value="Daa-tRNA_deacyls_DTD"/>
</dbReference>
<dbReference type="InterPro" id="IPR023509">
    <property type="entry name" value="DTD-like_sf"/>
</dbReference>
<dbReference type="NCBIfam" id="TIGR00256">
    <property type="entry name" value="D-aminoacyl-tRNA deacylase"/>
    <property type="match status" value="1"/>
</dbReference>
<dbReference type="PANTHER" id="PTHR10472:SF5">
    <property type="entry name" value="D-AMINOACYL-TRNA DEACYLASE 1"/>
    <property type="match status" value="1"/>
</dbReference>
<dbReference type="PANTHER" id="PTHR10472">
    <property type="entry name" value="D-TYROSYL-TRNA TYR DEACYLASE"/>
    <property type="match status" value="1"/>
</dbReference>
<dbReference type="Pfam" id="PF02580">
    <property type="entry name" value="Tyr_Deacylase"/>
    <property type="match status" value="1"/>
</dbReference>
<dbReference type="SUPFAM" id="SSF69500">
    <property type="entry name" value="DTD-like"/>
    <property type="match status" value="1"/>
</dbReference>
<keyword id="KW-0963">Cytoplasm</keyword>
<keyword id="KW-0378">Hydrolase</keyword>
<keyword id="KW-0694">RNA-binding</keyword>
<keyword id="KW-0820">tRNA-binding</keyword>
<proteinExistence type="inferred from homology"/>
<name>DTD_LEGPC</name>
<reference key="1">
    <citation type="submission" date="2006-11" db="EMBL/GenBank/DDBJ databases">
        <title>Identification and characterization of a new conjugation/ type IVA secretion system (trb/tra) of L. pneumophila Corby localized on a mobile genomic island.</title>
        <authorList>
            <person name="Gloeckner G."/>
            <person name="Albert-Weissenberger C."/>
            <person name="Weinmann E."/>
            <person name="Jacobi S."/>
            <person name="Schunder E."/>
            <person name="Steinert M."/>
            <person name="Buchrieser C."/>
            <person name="Hacker J."/>
            <person name="Heuner K."/>
        </authorList>
    </citation>
    <scope>NUCLEOTIDE SEQUENCE [LARGE SCALE GENOMIC DNA]</scope>
    <source>
        <strain>Corby</strain>
    </source>
</reference>
<sequence length="145" mass="16136">MLTVLQRVKEARVDIDGQTVGKINHGLLILCGFEPKDSLENIKRMLDKCINYRIFEDPSGKMNLSLKDVNGGLLLVPQFTLMADTQKGLRPSFSNAASPELGRELFDNLLTLAQKCHQNTQSGCFGANMQVYLCNDGPVTFLLQF</sequence>
<accession>A5ID02</accession>
<protein>
    <recommendedName>
        <fullName evidence="1">D-aminoacyl-tRNA deacylase</fullName>
        <shortName evidence="1">DTD</shortName>
        <ecNumber evidence="1">3.1.1.96</ecNumber>
    </recommendedName>
    <alternativeName>
        <fullName evidence="1">Gly-tRNA(Ala) deacylase</fullName>
    </alternativeName>
</protein>
<gene>
    <name evidence="1" type="primary">dtd</name>
    <name type="ordered locus">LPC_1289</name>
</gene>
<feature type="chain" id="PRO_1000050848" description="D-aminoacyl-tRNA deacylase">
    <location>
        <begin position="1"/>
        <end position="145"/>
    </location>
</feature>
<feature type="short sequence motif" description="Gly-cisPro motif, important for rejection of L-amino acids" evidence="1">
    <location>
        <begin position="137"/>
        <end position="138"/>
    </location>
</feature>
<organism>
    <name type="scientific">Legionella pneumophila (strain Corby)</name>
    <dbReference type="NCBI Taxonomy" id="400673"/>
    <lineage>
        <taxon>Bacteria</taxon>
        <taxon>Pseudomonadati</taxon>
        <taxon>Pseudomonadota</taxon>
        <taxon>Gammaproteobacteria</taxon>
        <taxon>Legionellales</taxon>
        <taxon>Legionellaceae</taxon>
        <taxon>Legionella</taxon>
    </lineage>
</organism>
<comment type="function">
    <text evidence="1">An aminoacyl-tRNA editing enzyme that deacylates mischarged D-aminoacyl-tRNAs. Also deacylates mischarged glycyl-tRNA(Ala), protecting cells against glycine mischarging by AlaRS. Acts via tRNA-based rather than protein-based catalysis; rejects L-amino acids rather than detecting D-amino acids in the active site. By recycling D-aminoacyl-tRNA to D-amino acids and free tRNA molecules, this enzyme counteracts the toxicity associated with the formation of D-aminoacyl-tRNA entities in vivo and helps enforce protein L-homochirality.</text>
</comment>
<comment type="catalytic activity">
    <reaction evidence="1">
        <text>glycyl-tRNA(Ala) + H2O = tRNA(Ala) + glycine + H(+)</text>
        <dbReference type="Rhea" id="RHEA:53744"/>
        <dbReference type="Rhea" id="RHEA-COMP:9657"/>
        <dbReference type="Rhea" id="RHEA-COMP:13640"/>
        <dbReference type="ChEBI" id="CHEBI:15377"/>
        <dbReference type="ChEBI" id="CHEBI:15378"/>
        <dbReference type="ChEBI" id="CHEBI:57305"/>
        <dbReference type="ChEBI" id="CHEBI:78442"/>
        <dbReference type="ChEBI" id="CHEBI:78522"/>
        <dbReference type="EC" id="3.1.1.96"/>
    </reaction>
</comment>
<comment type="catalytic activity">
    <reaction evidence="1">
        <text>a D-aminoacyl-tRNA + H2O = a tRNA + a D-alpha-amino acid + H(+)</text>
        <dbReference type="Rhea" id="RHEA:13953"/>
        <dbReference type="Rhea" id="RHEA-COMP:10123"/>
        <dbReference type="Rhea" id="RHEA-COMP:10124"/>
        <dbReference type="ChEBI" id="CHEBI:15377"/>
        <dbReference type="ChEBI" id="CHEBI:15378"/>
        <dbReference type="ChEBI" id="CHEBI:59871"/>
        <dbReference type="ChEBI" id="CHEBI:78442"/>
        <dbReference type="ChEBI" id="CHEBI:79333"/>
        <dbReference type="EC" id="3.1.1.96"/>
    </reaction>
</comment>
<comment type="subunit">
    <text evidence="1">Homodimer.</text>
</comment>
<comment type="subcellular location">
    <subcellularLocation>
        <location evidence="1">Cytoplasm</location>
    </subcellularLocation>
</comment>
<comment type="domain">
    <text evidence="1">A Gly-cisPro motif from one monomer fits into the active site of the other monomer to allow specific chiral rejection of L-amino acids.</text>
</comment>
<comment type="similarity">
    <text evidence="1">Belongs to the DTD family.</text>
</comment>
<evidence type="ECO:0000255" key="1">
    <source>
        <dbReference type="HAMAP-Rule" id="MF_00518"/>
    </source>
</evidence>